<proteinExistence type="evidence at protein level"/>
<name>PXK_HUMAN</name>
<gene>
    <name evidence="23" type="primary">PXK</name>
</gene>
<keyword id="KW-0009">Actin-binding</keyword>
<keyword id="KW-0025">Alternative splicing</keyword>
<keyword id="KW-1003">Cell membrane</keyword>
<keyword id="KW-0963">Cytoplasm</keyword>
<keyword id="KW-0472">Membrane</keyword>
<keyword id="KW-1267">Proteomics identification</keyword>
<keyword id="KW-1185">Reference proteome</keyword>
<evidence type="ECO:0000250" key="1">
    <source>
        <dbReference type="UniProtKB" id="Q8BX57"/>
    </source>
</evidence>
<evidence type="ECO:0000255" key="2">
    <source>
        <dbReference type="PROSITE-ProRule" id="PRU00147"/>
    </source>
</evidence>
<evidence type="ECO:0000255" key="3">
    <source>
        <dbReference type="PROSITE-ProRule" id="PRU00159"/>
    </source>
</evidence>
<evidence type="ECO:0000255" key="4">
    <source>
        <dbReference type="PROSITE-ProRule" id="PRU00406"/>
    </source>
</evidence>
<evidence type="ECO:0000256" key="5">
    <source>
        <dbReference type="SAM" id="MobiDB-lite"/>
    </source>
</evidence>
<evidence type="ECO:0000269" key="6">
    <source>
    </source>
</evidence>
<evidence type="ECO:0000269" key="7">
    <source>
    </source>
</evidence>
<evidence type="ECO:0000269" key="8">
    <source>
    </source>
</evidence>
<evidence type="ECO:0000303" key="9">
    <source>
    </source>
</evidence>
<evidence type="ECO:0000303" key="10">
    <source>
    </source>
</evidence>
<evidence type="ECO:0000303" key="11">
    <source>
    </source>
</evidence>
<evidence type="ECO:0000303" key="12">
    <source ref="3"/>
</evidence>
<evidence type="ECO:0000303" key="13">
    <source ref="5"/>
</evidence>
<evidence type="ECO:0000305" key="14"/>
<evidence type="ECO:0000312" key="15">
    <source>
        <dbReference type="EMBL" id="AAH08943.1"/>
    </source>
</evidence>
<evidence type="ECO:0000312" key="16">
    <source>
        <dbReference type="EMBL" id="AAH14479.1"/>
    </source>
</evidence>
<evidence type="ECO:0000312" key="17">
    <source>
        <dbReference type="EMBL" id="AAK94455.1"/>
    </source>
</evidence>
<evidence type="ECO:0000312" key="18">
    <source>
        <dbReference type="EMBL" id="AAR98521.1"/>
    </source>
</evidence>
<evidence type="ECO:0000312" key="19">
    <source>
        <dbReference type="EMBL" id="AAZ38821.1"/>
    </source>
</evidence>
<evidence type="ECO:0000312" key="20">
    <source>
        <dbReference type="EMBL" id="BAA91097.1"/>
    </source>
</evidence>
<evidence type="ECO:0000312" key="21">
    <source>
        <dbReference type="EMBL" id="BAD18536.1"/>
    </source>
</evidence>
<evidence type="ECO:0000312" key="22">
    <source>
        <dbReference type="EMBL" id="BAD92925.1"/>
    </source>
</evidence>
<evidence type="ECO:0000312" key="23">
    <source>
        <dbReference type="HGNC" id="HGNC:23326"/>
    </source>
</evidence>
<accession>Q7Z7A4</accession>
<accession>Q3BCH4</accession>
<accession>Q3BCH5</accession>
<accession>Q3BCH6</accession>
<accession>Q3BDW1</accession>
<accession>Q45L83</accession>
<accession>Q59EX3</accession>
<accession>Q6PK17</accession>
<accession>Q6ZN39</accession>
<accession>Q96CA3</accession>
<accession>Q96R07</accession>
<accession>Q9NXB8</accession>
<organism>
    <name type="scientific">Homo sapiens</name>
    <name type="common">Human</name>
    <dbReference type="NCBI Taxonomy" id="9606"/>
    <lineage>
        <taxon>Eukaryota</taxon>
        <taxon>Metazoa</taxon>
        <taxon>Chordata</taxon>
        <taxon>Craniata</taxon>
        <taxon>Vertebrata</taxon>
        <taxon>Euteleostomi</taxon>
        <taxon>Mammalia</taxon>
        <taxon>Eutheria</taxon>
        <taxon>Euarchontoglires</taxon>
        <taxon>Primates</taxon>
        <taxon>Haplorrhini</taxon>
        <taxon>Catarrhini</taxon>
        <taxon>Hominidae</taxon>
        <taxon>Homo</taxon>
    </lineage>
</organism>
<protein>
    <recommendedName>
        <fullName>PX domain-containing protein kinase-like protein</fullName>
    </recommendedName>
    <alternativeName>
        <fullName>Modulator of Na,K-ATPase</fullName>
        <shortName>MONaKA</shortName>
    </alternativeName>
</protein>
<feature type="chain" id="PRO_0000086592" description="PX domain-containing protein kinase-like protein">
    <location>
        <begin position="1"/>
        <end position="578"/>
    </location>
</feature>
<feature type="domain" description="PX" evidence="2">
    <location>
        <begin position="14"/>
        <end position="126"/>
    </location>
</feature>
<feature type="domain" description="Protein kinase" evidence="3">
    <location>
        <begin position="88"/>
        <end position="481"/>
    </location>
</feature>
<feature type="domain" description="WH2" evidence="4">
    <location>
        <begin position="548"/>
        <end position="567"/>
    </location>
</feature>
<feature type="region of interest" description="Disordered" evidence="5">
    <location>
        <begin position="437"/>
        <end position="548"/>
    </location>
</feature>
<feature type="region of interest" description="Disordered" evidence="5">
    <location>
        <begin position="559"/>
        <end position="578"/>
    </location>
</feature>
<feature type="compositionally biased region" description="Basic residues" evidence="5">
    <location>
        <begin position="437"/>
        <end position="448"/>
    </location>
</feature>
<feature type="compositionally biased region" description="Basic residues" evidence="5">
    <location>
        <begin position="457"/>
        <end position="469"/>
    </location>
</feature>
<feature type="compositionally biased region" description="Low complexity" evidence="5">
    <location>
        <begin position="483"/>
        <end position="513"/>
    </location>
</feature>
<feature type="compositionally biased region" description="Pro residues" evidence="5">
    <location>
        <begin position="514"/>
        <end position="530"/>
    </location>
</feature>
<feature type="compositionally biased region" description="Basic and acidic residues" evidence="5">
    <location>
        <begin position="568"/>
        <end position="578"/>
    </location>
</feature>
<feature type="splice variant" id="VSP_051907" description="In isoform 3." evidence="11">
    <location>
        <begin position="1"/>
        <end position="226"/>
    </location>
</feature>
<feature type="splice variant" id="VSP_051908" description="In isoform 5." evidence="11">
    <location>
        <begin position="1"/>
        <end position="137"/>
    </location>
</feature>
<feature type="splice variant" id="VSP_051909" description="In isoform 7." evidence="11">
    <location>
        <begin position="1"/>
        <end position="83"/>
    </location>
</feature>
<feature type="splice variant" id="VSP_051910" description="In isoform 6." evidence="11">
    <location>
        <begin position="35"/>
        <end position="67"/>
    </location>
</feature>
<feature type="splice variant" id="VSP_051911" description="In isoform 4." evidence="9">
    <location>
        <begin position="35"/>
        <end position="51"/>
    </location>
</feature>
<feature type="splice variant" id="VSP_051912" description="In isoform 2." evidence="10 12 13">
    <original>GISALP</original>
    <variation>VEHAPF</variation>
    <location>
        <begin position="510"/>
        <end position="515"/>
    </location>
</feature>
<feature type="splice variant" id="VSP_051913" description="In isoform 2." evidence="10 12 13">
    <location>
        <begin position="516"/>
        <end position="578"/>
    </location>
</feature>
<feature type="sequence variant" id="VAR_041362" description="In dbSNP:rs55973253." evidence="8">
    <original>I</original>
    <variation>V</variation>
    <location>
        <position position="426"/>
    </location>
</feature>
<feature type="sequence variant" id="VAR_041363" description="In dbSNP:rs56384862." evidence="7 8">
    <original>K</original>
    <variation>R</variation>
    <location>
        <position position="481"/>
    </location>
</feature>
<feature type="sequence variant" id="VAR_033911" description="In dbSNP:rs34579268.">
    <original>A</original>
    <variation>V</variation>
    <location>
        <position position="525"/>
    </location>
</feature>
<feature type="sequence variant" id="VAR_033912" description="In dbSNP:rs34579268.">
    <original>A</original>
    <variation>V</variation>
    <location>
        <position position="535"/>
    </location>
</feature>
<feature type="mutagenesis site" description="No effect on subcellular location." evidence="7">
    <original>R</original>
    <variation>Q</variation>
    <location>
        <position position="54"/>
    </location>
</feature>
<feature type="mutagenesis site" description="Results in redistribution of protein from cytoplasm throughout entire cell." evidence="7">
    <original>Y</original>
    <variation>A</variation>
    <location>
        <position position="56"/>
    </location>
</feature>
<feature type="mutagenesis site" description="Results in redistribution of protein from cytoplasm throughout entire cell." evidence="7">
    <original>R</original>
    <variation>L</variation>
    <location>
        <position position="92"/>
    </location>
</feature>
<feature type="sequence conflict" description="In Ref. 3; AAK94455 and 6; BAA91097." evidence="14" ref="3 6">
    <original>R</original>
    <variation>G</variation>
    <location>
        <position position="42"/>
    </location>
</feature>
<feature type="sequence conflict" description="In Ref. 2; AAR98521." evidence="14" ref="2">
    <original>R</original>
    <variation>K</variation>
    <location>
        <position position="459"/>
    </location>
</feature>
<feature type="sequence conflict" description="In Ref. 6; BAD18536." evidence="14" ref="6">
    <location>
        <position position="489"/>
    </location>
</feature>
<reference evidence="14 19" key="1">
    <citation type="journal article" date="2005" name="J. Neurosci.">
        <title>MONaKA, a novel modulator of the plasma membrane Na,K-ATPase.</title>
        <authorList>
            <person name="Mao H."/>
            <person name="Ferguson T.S."/>
            <person name="Cibulsky S.M."/>
            <person name="Holmqvist M."/>
            <person name="Ding C."/>
            <person name="Fei H."/>
            <person name="Levitan I.B."/>
        </authorList>
    </citation>
    <scope>NUCLEOTIDE SEQUENCE [MRNA] (ISOFORMS 1 AND 2)</scope>
    <source>
        <tissue evidence="6">Brain</tissue>
    </source>
</reference>
<reference evidence="14 18" key="2">
    <citation type="journal article" date="2005" name="Int. J. Mol. Med.">
        <title>Expression pattern and subcellular localization of five splice isoforms of human PXK.</title>
        <authorList>
            <person name="Zou X."/>
            <person name="Qiu G."/>
            <person name="Chen C."/>
            <person name="Wu M."/>
            <person name="Hu Y."/>
            <person name="Zheng H."/>
            <person name="Li X."/>
            <person name="Gu S."/>
            <person name="Ji C."/>
            <person name="Mao Y."/>
        </authorList>
    </citation>
    <scope>NUCLEOTIDE SEQUENCE [MRNA] (ISOFORMS 1; 3; 5; 6 AND 7)</scope>
    <scope>TISSUE SPECIFICITY</scope>
    <scope>SUBCELLULAR LOCATION</scope>
    <scope>MUTAGENESIS OF ARG-54; TYR-56 AND ARG-92</scope>
    <scope>VARIANT ARG-481</scope>
    <source>
        <tissue evidence="7">Fetal brain</tissue>
    </source>
</reference>
<reference evidence="14 17" key="3">
    <citation type="submission" date="2001-07" db="EMBL/GenBank/DDBJ databases">
        <authorList>
            <person name="Hong W."/>
        </authorList>
    </citation>
    <scope>NUCLEOTIDE SEQUENCE [MRNA] (ISOFORM 2)</scope>
</reference>
<reference evidence="14 17" key="4">
    <citation type="submission" date="2003-04" db="EMBL/GenBank/DDBJ databases">
        <authorList>
            <person name="Shan Y.X."/>
            <person name="Yu L."/>
        </authorList>
    </citation>
    <scope>NUCLEOTIDE SEQUENCE [MRNA] (ISOFORM 1)</scope>
</reference>
<reference evidence="14 17" key="5">
    <citation type="submission" date="2005-03" db="EMBL/GenBank/DDBJ databases">
        <authorList>
            <person name="Totoki Y."/>
            <person name="Toyoda A."/>
            <person name="Takeda T."/>
            <person name="Sakaki Y."/>
            <person name="Tanaka A."/>
            <person name="Yokoyama S."/>
            <person name="Ohara O."/>
            <person name="Nagase T."/>
            <person name="Kikuno R.F."/>
        </authorList>
    </citation>
    <scope>NUCLEOTIDE SEQUENCE [LARGE SCALE MRNA] (ISOFORM 2)</scope>
    <source>
        <tissue evidence="22">Brain</tissue>
    </source>
</reference>
<reference evidence="14 21" key="6">
    <citation type="journal article" date="2004" name="Nat. Genet.">
        <title>Complete sequencing and characterization of 21,243 full-length human cDNAs.</title>
        <authorList>
            <person name="Ota T."/>
            <person name="Suzuki Y."/>
            <person name="Nishikawa T."/>
            <person name="Otsuki T."/>
            <person name="Sugiyama T."/>
            <person name="Irie R."/>
            <person name="Wakamatsu A."/>
            <person name="Hayashi K."/>
            <person name="Sato H."/>
            <person name="Nagai K."/>
            <person name="Kimura K."/>
            <person name="Makita H."/>
            <person name="Sekine M."/>
            <person name="Obayashi M."/>
            <person name="Nishi T."/>
            <person name="Shibahara T."/>
            <person name="Tanaka T."/>
            <person name="Ishii S."/>
            <person name="Yamamoto J."/>
            <person name="Saito K."/>
            <person name="Kawai Y."/>
            <person name="Isono Y."/>
            <person name="Nakamura Y."/>
            <person name="Nagahari K."/>
            <person name="Murakami K."/>
            <person name="Yasuda T."/>
            <person name="Iwayanagi T."/>
            <person name="Wagatsuma M."/>
            <person name="Shiratori A."/>
            <person name="Sudo H."/>
            <person name="Hosoiri T."/>
            <person name="Kaku Y."/>
            <person name="Kodaira H."/>
            <person name="Kondo H."/>
            <person name="Sugawara M."/>
            <person name="Takahashi M."/>
            <person name="Kanda K."/>
            <person name="Yokoi T."/>
            <person name="Furuya T."/>
            <person name="Kikkawa E."/>
            <person name="Omura Y."/>
            <person name="Abe K."/>
            <person name="Kamihara K."/>
            <person name="Katsuta N."/>
            <person name="Sato K."/>
            <person name="Tanikawa M."/>
            <person name="Yamazaki M."/>
            <person name="Ninomiya K."/>
            <person name="Ishibashi T."/>
            <person name="Yamashita H."/>
            <person name="Murakawa K."/>
            <person name="Fujimori K."/>
            <person name="Tanai H."/>
            <person name="Kimata M."/>
            <person name="Watanabe M."/>
            <person name="Hiraoka S."/>
            <person name="Chiba Y."/>
            <person name="Ishida S."/>
            <person name="Ono Y."/>
            <person name="Takiguchi S."/>
            <person name="Watanabe S."/>
            <person name="Yosida M."/>
            <person name="Hotuta T."/>
            <person name="Kusano J."/>
            <person name="Kanehori K."/>
            <person name="Takahashi-Fujii A."/>
            <person name="Hara H."/>
            <person name="Tanase T.-O."/>
            <person name="Nomura Y."/>
            <person name="Togiya S."/>
            <person name="Komai F."/>
            <person name="Hara R."/>
            <person name="Takeuchi K."/>
            <person name="Arita M."/>
            <person name="Imose N."/>
            <person name="Musashino K."/>
            <person name="Yuuki H."/>
            <person name="Oshima A."/>
            <person name="Sasaki N."/>
            <person name="Aotsuka S."/>
            <person name="Yoshikawa Y."/>
            <person name="Matsunawa H."/>
            <person name="Ichihara T."/>
            <person name="Shiohata N."/>
            <person name="Sano S."/>
            <person name="Moriya S."/>
            <person name="Momiyama H."/>
            <person name="Satoh N."/>
            <person name="Takami S."/>
            <person name="Terashima Y."/>
            <person name="Suzuki O."/>
            <person name="Nakagawa S."/>
            <person name="Senoh A."/>
            <person name="Mizoguchi H."/>
            <person name="Goto Y."/>
            <person name="Shimizu F."/>
            <person name="Wakebe H."/>
            <person name="Hishigaki H."/>
            <person name="Watanabe T."/>
            <person name="Sugiyama A."/>
            <person name="Takemoto M."/>
            <person name="Kawakami B."/>
            <person name="Yamazaki M."/>
            <person name="Watanabe K."/>
            <person name="Kumagai A."/>
            <person name="Itakura S."/>
            <person name="Fukuzumi Y."/>
            <person name="Fujimori Y."/>
            <person name="Komiyama M."/>
            <person name="Tashiro H."/>
            <person name="Tanigami A."/>
            <person name="Fujiwara T."/>
            <person name="Ono T."/>
            <person name="Yamada K."/>
            <person name="Fujii Y."/>
            <person name="Ozaki K."/>
            <person name="Hirao M."/>
            <person name="Ohmori Y."/>
            <person name="Kawabata A."/>
            <person name="Hikiji T."/>
            <person name="Kobatake N."/>
            <person name="Inagaki H."/>
            <person name="Ikema Y."/>
            <person name="Okamoto S."/>
            <person name="Okitani R."/>
            <person name="Kawakami T."/>
            <person name="Noguchi S."/>
            <person name="Itoh T."/>
            <person name="Shigeta K."/>
            <person name="Senba T."/>
            <person name="Matsumura K."/>
            <person name="Nakajima Y."/>
            <person name="Mizuno T."/>
            <person name="Morinaga M."/>
            <person name="Sasaki M."/>
            <person name="Togashi T."/>
            <person name="Oyama M."/>
            <person name="Hata H."/>
            <person name="Watanabe M."/>
            <person name="Komatsu T."/>
            <person name="Mizushima-Sugano J."/>
            <person name="Satoh T."/>
            <person name="Shirai Y."/>
            <person name="Takahashi Y."/>
            <person name="Nakagawa K."/>
            <person name="Okumura K."/>
            <person name="Nagase T."/>
            <person name="Nomura N."/>
            <person name="Kikuchi H."/>
            <person name="Masuho Y."/>
            <person name="Yamashita R."/>
            <person name="Nakai K."/>
            <person name="Yada T."/>
            <person name="Nakamura Y."/>
            <person name="Ohara O."/>
            <person name="Isogai T."/>
            <person name="Sugano S."/>
        </authorList>
    </citation>
    <scope>NUCLEOTIDE SEQUENCE [LARGE SCALE MRNA] (ISOFORMS 1 AND 4)</scope>
    <source>
        <tissue evidence="21">Caudate nucleus</tissue>
        <tissue evidence="20">Hepatoma</tissue>
    </source>
</reference>
<reference evidence="14 16" key="7">
    <citation type="journal article" date="2004" name="Genome Res.">
        <title>The status, quality, and expansion of the NIH full-length cDNA project: the Mammalian Gene Collection (MGC).</title>
        <authorList>
            <consortium name="The MGC Project Team"/>
        </authorList>
    </citation>
    <scope>NUCLEOTIDE SEQUENCE [LARGE SCALE MRNA] OF 1-461 (ISOFORMS 1/2)</scope>
    <source>
        <tissue evidence="16">B-cell</tissue>
        <tissue evidence="15">Kidney</tissue>
    </source>
</reference>
<reference key="8">
    <citation type="journal article" date="2009" name="Sci. Signal.">
        <title>Quantitative phosphoproteomic analysis of T cell receptor signaling reveals system-wide modulation of protein-protein interactions.</title>
        <authorList>
            <person name="Mayya V."/>
            <person name="Lundgren D.H."/>
            <person name="Hwang S.-I."/>
            <person name="Rezaul K."/>
            <person name="Wu L."/>
            <person name="Eng J.K."/>
            <person name="Rodionov V."/>
            <person name="Han D.K."/>
        </authorList>
    </citation>
    <scope>IDENTIFICATION BY MASS SPECTROMETRY [LARGE SCALE ANALYSIS]</scope>
    <source>
        <tissue>Leukemic T-cell</tissue>
    </source>
</reference>
<reference key="9">
    <citation type="journal article" date="2015" name="Proteomics">
        <title>N-terminome analysis of the human mitochondrial proteome.</title>
        <authorList>
            <person name="Vaca Jacome A.S."/>
            <person name="Rabilloud T."/>
            <person name="Schaeffer-Reiss C."/>
            <person name="Rompais M."/>
            <person name="Ayoub D."/>
            <person name="Lane L."/>
            <person name="Bairoch A."/>
            <person name="Van Dorsselaer A."/>
            <person name="Carapito C."/>
        </authorList>
    </citation>
    <scope>IDENTIFICATION BY MASS SPECTROMETRY [LARGE SCALE ANALYSIS]</scope>
</reference>
<reference key="10">
    <citation type="journal article" date="2007" name="Nature">
        <title>Patterns of somatic mutation in human cancer genomes.</title>
        <authorList>
            <person name="Greenman C."/>
            <person name="Stephens P."/>
            <person name="Smith R."/>
            <person name="Dalgliesh G.L."/>
            <person name="Hunter C."/>
            <person name="Bignell G."/>
            <person name="Davies H."/>
            <person name="Teague J."/>
            <person name="Butler A."/>
            <person name="Stevens C."/>
            <person name="Edkins S."/>
            <person name="O'Meara S."/>
            <person name="Vastrik I."/>
            <person name="Schmidt E.E."/>
            <person name="Avis T."/>
            <person name="Barthorpe S."/>
            <person name="Bhamra G."/>
            <person name="Buck G."/>
            <person name="Choudhury B."/>
            <person name="Clements J."/>
            <person name="Cole J."/>
            <person name="Dicks E."/>
            <person name="Forbes S."/>
            <person name="Gray K."/>
            <person name="Halliday K."/>
            <person name="Harrison R."/>
            <person name="Hills K."/>
            <person name="Hinton J."/>
            <person name="Jenkinson A."/>
            <person name="Jones D."/>
            <person name="Menzies A."/>
            <person name="Mironenko T."/>
            <person name="Perry J."/>
            <person name="Raine K."/>
            <person name="Richardson D."/>
            <person name="Shepherd R."/>
            <person name="Small A."/>
            <person name="Tofts C."/>
            <person name="Varian J."/>
            <person name="Webb T."/>
            <person name="West S."/>
            <person name="Widaa S."/>
            <person name="Yates A."/>
            <person name="Cahill D.P."/>
            <person name="Louis D.N."/>
            <person name="Goldstraw P."/>
            <person name="Nicholson A.G."/>
            <person name="Brasseur F."/>
            <person name="Looijenga L."/>
            <person name="Weber B.L."/>
            <person name="Chiew Y.-E."/>
            <person name="DeFazio A."/>
            <person name="Greaves M.F."/>
            <person name="Green A.R."/>
            <person name="Campbell P."/>
            <person name="Birney E."/>
            <person name="Easton D.F."/>
            <person name="Chenevix-Trench G."/>
            <person name="Tan M.-H."/>
            <person name="Khoo S.K."/>
            <person name="Teh B.T."/>
            <person name="Yuen S.T."/>
            <person name="Leung S.Y."/>
            <person name="Wooster R."/>
            <person name="Futreal P.A."/>
            <person name="Stratton M.R."/>
        </authorList>
    </citation>
    <scope>VARIANTS [LARGE SCALE ANALYSIS] VAL-426 AND ARG-481</scope>
</reference>
<comment type="function">
    <text evidence="1 11">Binds to and modulates brain Na,K-ATPase subunits ATP1B1 and ATP1B3 and may thereby participate in the regulation of electrical excitability and synaptic transmission. May not display kinase activity.</text>
</comment>
<comment type="subcellular location">
    <subcellularLocation>
        <location evidence="7">Cytoplasm</location>
    </subcellularLocation>
    <subcellularLocation>
        <location evidence="7">Cell membrane</location>
        <topology evidence="7">Peripheral membrane protein</topology>
    </subcellularLocation>
    <text>Also associates with the plasma membrane. Isoform 3 is present throughout the cell.</text>
</comment>
<comment type="alternative products">
    <event type="alternative splicing"/>
    <isoform>
        <id>Q7Z7A4-1</id>
        <name evidence="6">1</name>
        <name evidence="10">Long</name>
        <name evidence="11">v1</name>
        <sequence type="displayed"/>
    </isoform>
    <isoform>
        <id>Q7Z7A4-2</id>
        <name evidence="6">2</name>
        <name evidence="10">Short</name>
        <sequence type="described" ref="VSP_051912 VSP_051913"/>
    </isoform>
    <isoform>
        <id>Q7Z7A4-3</id>
        <name evidence="7">3</name>
        <name evidence="11">v3</name>
        <sequence type="described" ref="VSP_051907"/>
    </isoform>
    <isoform>
        <id>Q7Z7A4-4</id>
        <name evidence="14">4</name>
        <sequence type="described" ref="VSP_051911"/>
    </isoform>
    <isoform>
        <id>Q7Z7A4-5</id>
        <name evidence="7">5</name>
        <name evidence="11">v4</name>
        <sequence type="described" ref="VSP_051908"/>
    </isoform>
    <isoform>
        <id>Q7Z7A4-6</id>
        <name evidence="7">6</name>
        <name evidence="11">v2</name>
        <sequence type="described" ref="VSP_051910"/>
    </isoform>
    <isoform>
        <id>Q7Z7A4-7</id>
        <name evidence="7">7</name>
        <name evidence="11">v5</name>
        <sequence type="described" ref="VSP_051909"/>
    </isoform>
</comment>
<comment type="tissue specificity">
    <text evidence="7">Widely expressed in all tissues examined except in heart. Isoform 1 is expressed in high levels in the brain, skeletal muscle, spleen and testis. Isoform 7 expression has yet to be demonstrated.</text>
</comment>
<comment type="domain">
    <text>The protein kinase domain is predicted to be catalytically inactive.</text>
</comment>
<comment type="similarity">
    <text evidence="14">Belongs to the protein kinase superfamily.</text>
</comment>
<comment type="sequence caution" evidence="14">
    <conflict type="erroneous termination">
        <sequence resource="EMBL-CDS" id="AAH14479"/>
    </conflict>
    <text>Truncated C-terminus.</text>
</comment>
<comment type="sequence caution" evidence="14">
    <conflict type="frameshift">
        <sequence resource="EMBL-CDS" id="BAA91097"/>
    </conflict>
</comment>
<comment type="sequence caution" evidence="14">
    <conflict type="frameshift">
        <sequence resource="EMBL-CDS" id="BAD18536"/>
    </conflict>
</comment>
<comment type="sequence caution" evidence="14">
    <conflict type="frameshift">
        <sequence resource="EMBL-CDS" id="BAD92925"/>
    </conflict>
</comment>
<sequence>MAFMEKPPAGKVLLDDTVPLTAAIEASQSLQSHTEYIIRVQRGISVENSWQIVRRYSDFDLLNNSLQIAGLSLPLPPKKLIGNMDREFIAERQKGLQNYLNVITTNHILSNCELVKKFLDPNNYSANYTEIALQQVSMFFRSEPKWEVVEPLKDIGWRIRKKYFLMKIKNQPKERLVLSWADLGPDKYLSDKDFQCLIKLLPSCLHPYIYRVTFATANESSALLIRMFNEKGTLKDLIYKAKPKDPFLKKYCNPKKIQGLELQQIKTYGRQILEVLKFLHDKGFPYGHLHASNVMLDGDTCRLLDLENSLLGLPSFYRSYFSQFRKINTLESVDVHCFGHLLYEMTYGRPPDSVPVDSFPPAPSMAVVAVLESTLSCEACKNGMPTISRLLQMPLFSDVLLTTSEKPQFKIPTKLKEALRIAKECIEKRLIEEQKQIHQHRRLTRAQSHHGSEEERKKRKILARKKSKRSALENSEEHSAKYSNSNNSAGSGASSPLTSPSSPTPPSTSGISALPPPPPPPPPPAAPLPPASTEAPAQLSSQAVNGMSRGALLSSIQNFQKGTLRKAKTCDHSAPKIG</sequence>
<dbReference type="EMBL" id="DQ124707">
    <property type="protein sequence ID" value="AAZ38821.1"/>
    <property type="molecule type" value="mRNA"/>
</dbReference>
<dbReference type="EMBL" id="DQ124708">
    <property type="protein sequence ID" value="AAZ38822.1"/>
    <property type="molecule type" value="mRNA"/>
</dbReference>
<dbReference type="EMBL" id="AY437879">
    <property type="protein sequence ID" value="AAR98521.1"/>
    <property type="molecule type" value="mRNA"/>
</dbReference>
<dbReference type="EMBL" id="AY847222">
    <property type="protein sequence ID" value="AAX73354.1"/>
    <property type="molecule type" value="mRNA"/>
</dbReference>
<dbReference type="EMBL" id="AY847220">
    <property type="protein sequence ID" value="AAX73352.1"/>
    <property type="molecule type" value="mRNA"/>
</dbReference>
<dbReference type="EMBL" id="AY847221">
    <property type="protein sequence ID" value="AAX73353.1"/>
    <property type="molecule type" value="mRNA"/>
</dbReference>
<dbReference type="EMBL" id="AF399753">
    <property type="protein sequence ID" value="AAK94455.1"/>
    <property type="molecule type" value="mRNA"/>
</dbReference>
<dbReference type="EMBL" id="AY274811">
    <property type="protein sequence ID" value="AAP42076.1"/>
    <property type="molecule type" value="mRNA"/>
</dbReference>
<dbReference type="EMBL" id="AB209688">
    <property type="protein sequence ID" value="BAD92925.1"/>
    <property type="status" value="ALT_FRAME"/>
    <property type="molecule type" value="mRNA"/>
</dbReference>
<dbReference type="EMBL" id="AK000342">
    <property type="protein sequence ID" value="BAA91097.1"/>
    <property type="status" value="ALT_FRAME"/>
    <property type="molecule type" value="mRNA"/>
</dbReference>
<dbReference type="EMBL" id="AK131385">
    <property type="protein sequence ID" value="BAD18536.1"/>
    <property type="status" value="ALT_FRAME"/>
    <property type="molecule type" value="mRNA"/>
</dbReference>
<dbReference type="EMBL" id="BC008943">
    <property type="protein sequence ID" value="AAH08943.1"/>
    <property type="molecule type" value="mRNA"/>
</dbReference>
<dbReference type="EMBL" id="BC014479">
    <property type="protein sequence ID" value="AAH14479.1"/>
    <property type="status" value="ALT_SEQ"/>
    <property type="molecule type" value="mRNA"/>
</dbReference>
<dbReference type="CCDS" id="CCDS2889.1">
    <molecule id="Q7Z7A4-1"/>
</dbReference>
<dbReference type="CCDS" id="CCDS74952.1">
    <molecule id="Q7Z7A4-2"/>
</dbReference>
<dbReference type="RefSeq" id="NP_001276024.1">
    <property type="nucleotide sequence ID" value="NM_001289095.1"/>
</dbReference>
<dbReference type="RefSeq" id="NP_001276025.1">
    <molecule id="Q7Z7A4-6"/>
    <property type="nucleotide sequence ID" value="NM_001289096.2"/>
</dbReference>
<dbReference type="RefSeq" id="NP_001276027.1">
    <molecule id="Q7Z7A4-2"/>
    <property type="nucleotide sequence ID" value="NM_001289098.2"/>
</dbReference>
<dbReference type="RefSeq" id="NP_001276028.1">
    <molecule id="Q7Z7A4-7"/>
    <property type="nucleotide sequence ID" value="NM_001289099.2"/>
</dbReference>
<dbReference type="RefSeq" id="NP_001276029.1">
    <property type="nucleotide sequence ID" value="NM_001289100.1"/>
</dbReference>
<dbReference type="RefSeq" id="NP_001276030.1">
    <molecule id="Q7Z7A4-5"/>
    <property type="nucleotide sequence ID" value="NM_001289101.2"/>
</dbReference>
<dbReference type="RefSeq" id="NP_001336417.1">
    <molecule id="Q7Z7A4-2"/>
    <property type="nucleotide sequence ID" value="NM_001349488.2"/>
</dbReference>
<dbReference type="RefSeq" id="NP_001336418.1">
    <molecule id="Q7Z7A4-7"/>
    <property type="nucleotide sequence ID" value="NM_001349489.2"/>
</dbReference>
<dbReference type="RefSeq" id="NP_001336420.1">
    <molecule id="Q7Z7A4-5"/>
    <property type="nucleotide sequence ID" value="NM_001349491.2"/>
</dbReference>
<dbReference type="RefSeq" id="NP_001336425.1">
    <molecule id="Q7Z7A4-4"/>
    <property type="nucleotide sequence ID" value="NM_001349496.2"/>
</dbReference>
<dbReference type="RefSeq" id="NP_060241.2">
    <molecule id="Q7Z7A4-1"/>
    <property type="nucleotide sequence ID" value="NM_017771.4"/>
</dbReference>
<dbReference type="RefSeq" id="XP_016862160.1">
    <property type="nucleotide sequence ID" value="XM_017006671.1"/>
</dbReference>
<dbReference type="RefSeq" id="XP_016862164.1">
    <property type="nucleotide sequence ID" value="XM_017006675.1"/>
</dbReference>
<dbReference type="RefSeq" id="XP_016862175.1">
    <property type="nucleotide sequence ID" value="XM_017006686.1"/>
</dbReference>
<dbReference type="SMR" id="Q7Z7A4"/>
<dbReference type="BioGRID" id="120245">
    <property type="interactions" value="40"/>
</dbReference>
<dbReference type="FunCoup" id="Q7Z7A4">
    <property type="interactions" value="2286"/>
</dbReference>
<dbReference type="IntAct" id="Q7Z7A4">
    <property type="interactions" value="35"/>
</dbReference>
<dbReference type="STRING" id="9606.ENSP00000348472"/>
<dbReference type="GlyGen" id="Q7Z7A4">
    <property type="glycosylation" value="2 sites, 1 O-linked glycan (1 site)"/>
</dbReference>
<dbReference type="iPTMnet" id="Q7Z7A4"/>
<dbReference type="PhosphoSitePlus" id="Q7Z7A4"/>
<dbReference type="BioMuta" id="PXK"/>
<dbReference type="DMDM" id="74759261"/>
<dbReference type="jPOST" id="Q7Z7A4"/>
<dbReference type="MassIVE" id="Q7Z7A4"/>
<dbReference type="PaxDb" id="9606-ENSP00000348472"/>
<dbReference type="PeptideAtlas" id="Q7Z7A4"/>
<dbReference type="ProteomicsDB" id="69499">
    <molecule id="Q7Z7A4-1"/>
</dbReference>
<dbReference type="ProteomicsDB" id="69500">
    <molecule id="Q7Z7A4-2"/>
</dbReference>
<dbReference type="ProteomicsDB" id="69501">
    <molecule id="Q7Z7A4-3"/>
</dbReference>
<dbReference type="ProteomicsDB" id="69502">
    <molecule id="Q7Z7A4-4"/>
</dbReference>
<dbReference type="ProteomicsDB" id="69503">
    <molecule id="Q7Z7A4-5"/>
</dbReference>
<dbReference type="ProteomicsDB" id="69504">
    <molecule id="Q7Z7A4-6"/>
</dbReference>
<dbReference type="ProteomicsDB" id="69505">
    <molecule id="Q7Z7A4-7"/>
</dbReference>
<dbReference type="Pumba" id="Q7Z7A4"/>
<dbReference type="Antibodypedia" id="15176">
    <property type="antibodies" value="167 antibodies from 26 providers"/>
</dbReference>
<dbReference type="DNASU" id="54899"/>
<dbReference type="Ensembl" id="ENST00000356151.7">
    <molecule id="Q7Z7A4-1"/>
    <property type="protein sequence ID" value="ENSP00000348472.2"/>
    <property type="gene ID" value="ENSG00000168297.16"/>
</dbReference>
<dbReference type="Ensembl" id="ENST00000383716.7">
    <molecule id="Q7Z7A4-2"/>
    <property type="protein sequence ID" value="ENSP00000373222.4"/>
    <property type="gene ID" value="ENSG00000168297.16"/>
</dbReference>
<dbReference type="Ensembl" id="ENST00000484288.5">
    <molecule id="Q7Z7A4-2"/>
    <property type="protein sequence ID" value="ENSP00000417915.1"/>
    <property type="gene ID" value="ENSG00000168297.16"/>
</dbReference>
<dbReference type="GeneID" id="54899"/>
<dbReference type="KEGG" id="hsa:54899"/>
<dbReference type="MANE-Select" id="ENST00000356151.7">
    <property type="protein sequence ID" value="ENSP00000348472.2"/>
    <property type="RefSeq nucleotide sequence ID" value="NM_017771.5"/>
    <property type="RefSeq protein sequence ID" value="NP_060241.2"/>
</dbReference>
<dbReference type="UCSC" id="uc003djx.2">
    <molecule id="Q7Z7A4-1"/>
    <property type="organism name" value="human"/>
</dbReference>
<dbReference type="AGR" id="HGNC:23326"/>
<dbReference type="CTD" id="54899"/>
<dbReference type="DisGeNET" id="54899"/>
<dbReference type="GeneCards" id="PXK"/>
<dbReference type="HGNC" id="HGNC:23326">
    <property type="gene designation" value="PXK"/>
</dbReference>
<dbReference type="HPA" id="ENSG00000168297">
    <property type="expression patterns" value="Tissue enhanced (brain)"/>
</dbReference>
<dbReference type="MalaCards" id="PXK"/>
<dbReference type="MIM" id="611450">
    <property type="type" value="gene"/>
</dbReference>
<dbReference type="neXtProt" id="NX_Q7Z7A4"/>
<dbReference type="OpenTargets" id="ENSG00000168297"/>
<dbReference type="Orphanet" id="536">
    <property type="disease" value="Systemic lupus erythematosus"/>
</dbReference>
<dbReference type="PharmGKB" id="PA134899496"/>
<dbReference type="VEuPathDB" id="HostDB:ENSG00000168297"/>
<dbReference type="eggNOG" id="KOG2101">
    <property type="taxonomic scope" value="Eukaryota"/>
</dbReference>
<dbReference type="GeneTree" id="ENSGT00390000017669"/>
<dbReference type="HOGENOM" id="CLU_036868_0_0_1"/>
<dbReference type="InParanoid" id="Q7Z7A4"/>
<dbReference type="OMA" id="FTQYAST"/>
<dbReference type="OrthoDB" id="41200at2759"/>
<dbReference type="PAN-GO" id="Q7Z7A4">
    <property type="GO annotations" value="4 GO annotations based on evolutionary models"/>
</dbReference>
<dbReference type="PhylomeDB" id="Q7Z7A4"/>
<dbReference type="TreeFam" id="TF324116"/>
<dbReference type="PathwayCommons" id="Q7Z7A4"/>
<dbReference type="SignaLink" id="Q7Z7A4"/>
<dbReference type="BioGRID-ORCS" id="54899">
    <property type="hits" value="11 hits in 1171 CRISPR screens"/>
</dbReference>
<dbReference type="ChiTaRS" id="PXK">
    <property type="organism name" value="human"/>
</dbReference>
<dbReference type="GenomeRNAi" id="54899"/>
<dbReference type="Pharos" id="Q7Z7A4">
    <property type="development level" value="Tbio"/>
</dbReference>
<dbReference type="PRO" id="PR:Q7Z7A4"/>
<dbReference type="Proteomes" id="UP000005640">
    <property type="component" value="Chromosome 3"/>
</dbReference>
<dbReference type="RNAct" id="Q7Z7A4">
    <property type="molecule type" value="protein"/>
</dbReference>
<dbReference type="Bgee" id="ENSG00000168297">
    <property type="expression patterns" value="Expressed in corpus callosum and 180 other cell types or tissues"/>
</dbReference>
<dbReference type="ExpressionAtlas" id="Q7Z7A4">
    <property type="expression patterns" value="baseline and differential"/>
</dbReference>
<dbReference type="GO" id="GO:0034451">
    <property type="term" value="C:centriolar satellite"/>
    <property type="evidence" value="ECO:0000314"/>
    <property type="project" value="HPA"/>
</dbReference>
<dbReference type="GO" id="GO:0005737">
    <property type="term" value="C:cytoplasm"/>
    <property type="evidence" value="ECO:0000314"/>
    <property type="project" value="UniProtKB"/>
</dbReference>
<dbReference type="GO" id="GO:0005829">
    <property type="term" value="C:cytosol"/>
    <property type="evidence" value="ECO:0000314"/>
    <property type="project" value="HPA"/>
</dbReference>
<dbReference type="GO" id="GO:0005634">
    <property type="term" value="C:nucleus"/>
    <property type="evidence" value="ECO:0000314"/>
    <property type="project" value="UniProtKB"/>
</dbReference>
<dbReference type="GO" id="GO:0005886">
    <property type="term" value="C:plasma membrane"/>
    <property type="evidence" value="ECO:0000314"/>
    <property type="project" value="HPA"/>
</dbReference>
<dbReference type="GO" id="GO:0032991">
    <property type="term" value="C:protein-containing complex"/>
    <property type="evidence" value="ECO:0007669"/>
    <property type="project" value="Ensembl"/>
</dbReference>
<dbReference type="GO" id="GO:0003779">
    <property type="term" value="F:actin binding"/>
    <property type="evidence" value="ECO:0007669"/>
    <property type="project" value="UniProtKB-KW"/>
</dbReference>
<dbReference type="GO" id="GO:0035091">
    <property type="term" value="F:phosphatidylinositol binding"/>
    <property type="evidence" value="ECO:0000303"/>
    <property type="project" value="UniProtKB"/>
</dbReference>
<dbReference type="GO" id="GO:0006954">
    <property type="term" value="P:inflammatory response"/>
    <property type="evidence" value="ECO:0000315"/>
    <property type="project" value="UniProtKB"/>
</dbReference>
<dbReference type="GO" id="GO:0050804">
    <property type="term" value="P:modulation of chemical synaptic transmission"/>
    <property type="evidence" value="ECO:0000250"/>
    <property type="project" value="UniProtKB"/>
</dbReference>
<dbReference type="GO" id="GO:0032780">
    <property type="term" value="P:negative regulation of ATP-dependent activity"/>
    <property type="evidence" value="ECO:0000250"/>
    <property type="project" value="UniProtKB"/>
</dbReference>
<dbReference type="GO" id="GO:0043271">
    <property type="term" value="P:negative regulation of monoatomic ion transport"/>
    <property type="evidence" value="ECO:0000250"/>
    <property type="project" value="UniProtKB"/>
</dbReference>
<dbReference type="CDD" id="cd06871">
    <property type="entry name" value="PX_MONaKA"/>
    <property type="match status" value="1"/>
</dbReference>
<dbReference type="CDD" id="cd22062">
    <property type="entry name" value="WH2_DdVASP-like"/>
    <property type="match status" value="1"/>
</dbReference>
<dbReference type="FunFam" id="3.30.200.20:FF:000161">
    <property type="entry name" value="PX domain-containing protein kinase-like protein isoform X2"/>
    <property type="match status" value="1"/>
</dbReference>
<dbReference type="FunFam" id="3.30.1520.10:FF:000010">
    <property type="entry name" value="PX domain-containing protein kinase-like protein isoform X6"/>
    <property type="match status" value="1"/>
</dbReference>
<dbReference type="FunFam" id="1.10.510.10:FF:000830">
    <property type="entry name" value="PX domain-containing serine/threonine kinase"/>
    <property type="match status" value="1"/>
</dbReference>
<dbReference type="Gene3D" id="3.30.200.20">
    <property type="entry name" value="Phosphorylase Kinase, domain 1"/>
    <property type="match status" value="1"/>
</dbReference>
<dbReference type="Gene3D" id="3.30.1520.10">
    <property type="entry name" value="Phox-like domain"/>
    <property type="match status" value="1"/>
</dbReference>
<dbReference type="Gene3D" id="1.10.510.10">
    <property type="entry name" value="Transferase(Phosphotransferase) domain 1"/>
    <property type="match status" value="1"/>
</dbReference>
<dbReference type="InterPro" id="IPR011009">
    <property type="entry name" value="Kinase-like_dom_sf"/>
</dbReference>
<dbReference type="InterPro" id="IPR037903">
    <property type="entry name" value="MONaKA_PX"/>
</dbReference>
<dbReference type="InterPro" id="IPR000719">
    <property type="entry name" value="Prot_kinase_dom"/>
</dbReference>
<dbReference type="InterPro" id="IPR001683">
    <property type="entry name" value="PX_dom"/>
</dbReference>
<dbReference type="InterPro" id="IPR036871">
    <property type="entry name" value="PX_dom_sf"/>
</dbReference>
<dbReference type="InterPro" id="IPR051837">
    <property type="entry name" value="SortingNexin/PXDomain-PKLike"/>
</dbReference>
<dbReference type="InterPro" id="IPR003124">
    <property type="entry name" value="WH2_dom"/>
</dbReference>
<dbReference type="PANTHER" id="PTHR22999:SF40">
    <property type="entry name" value="PX DOMAIN-CONTAINING PROTEIN KINASE-LIKE PROTEIN"/>
    <property type="match status" value="1"/>
</dbReference>
<dbReference type="PANTHER" id="PTHR22999">
    <property type="entry name" value="PX SERINE/THREONINE KINASE PXK"/>
    <property type="match status" value="1"/>
</dbReference>
<dbReference type="Pfam" id="PF00787">
    <property type="entry name" value="PX"/>
    <property type="match status" value="1"/>
</dbReference>
<dbReference type="Pfam" id="PF02205">
    <property type="entry name" value="WH2"/>
    <property type="match status" value="1"/>
</dbReference>
<dbReference type="SMART" id="SM00312">
    <property type="entry name" value="PX"/>
    <property type="match status" value="1"/>
</dbReference>
<dbReference type="SUPFAM" id="SSF56112">
    <property type="entry name" value="Protein kinase-like (PK-like)"/>
    <property type="match status" value="1"/>
</dbReference>
<dbReference type="SUPFAM" id="SSF64268">
    <property type="entry name" value="PX domain"/>
    <property type="match status" value="1"/>
</dbReference>
<dbReference type="PROSITE" id="PS50011">
    <property type="entry name" value="PROTEIN_KINASE_DOM"/>
    <property type="match status" value="1"/>
</dbReference>
<dbReference type="PROSITE" id="PS50195">
    <property type="entry name" value="PX"/>
    <property type="match status" value="1"/>
</dbReference>
<dbReference type="PROSITE" id="PS51082">
    <property type="entry name" value="WH2"/>
    <property type="match status" value="1"/>
</dbReference>